<accession>A0A0D2H023</accession>
<proteinExistence type="evidence at protein level"/>
<gene>
    <name evidence="3" type="primary">zhd101</name>
    <name type="ORF">Z519_12792</name>
</gene>
<reference key="1">
    <citation type="submission" date="2015-01" db="EMBL/GenBank/DDBJ databases">
        <title>The Genome Sequence of Cladophialophora bantiana CBS 173.52.</title>
        <authorList>
            <consortium name="The Broad Institute Genomics Platform"/>
            <person name="Cuomo C."/>
            <person name="de Hoog S."/>
            <person name="Gorbushina A."/>
            <person name="Stielow B."/>
            <person name="Teixiera M."/>
            <person name="Abouelleil A."/>
            <person name="Chapman S.B."/>
            <person name="Priest M."/>
            <person name="Young S.K."/>
            <person name="Wortman J."/>
            <person name="Nusbaum C."/>
            <person name="Birren B."/>
        </authorList>
    </citation>
    <scope>NUCLEOTIDE SEQUENCE [LARGE SCALE GENOMIC DNA]</scope>
    <source>
        <strain>ATCC 10958 / CDC1940 / 8579 / CBS 173.52</strain>
    </source>
</reference>
<reference evidence="5" key="2">
    <citation type="journal article" date="2017" name="Acta Crystallogr. F Struct. Biol. Commun.">
        <title>Characterization and crystal structure of a novel zearalenone hydrolase from Cladophialophora bantiana.</title>
        <authorList>
            <person name="Hui R."/>
            <person name="Hu X."/>
            <person name="Liu W."/>
            <person name="Liu W."/>
            <person name="Zheng Y."/>
            <person name="Chen Y."/>
            <person name="Guo R.T."/>
            <person name="Jin J."/>
            <person name="Chen C.C."/>
        </authorList>
    </citation>
    <scope>X-RAY CRYSTALLOGRAPHY (1.75 ANGSTROMS)</scope>
    <scope>SUBUNIT</scope>
    <scope>FUNCTION</scope>
    <scope>CATALYTIC ACTIVITY</scope>
    <scope>BIOPHYSICOCHEMICAL PROPERTIES</scope>
</reference>
<protein>
    <recommendedName>
        <fullName evidence="3">Zearalenone hydrolase</fullName>
        <ecNumber evidence="2">3.1.1.-</ecNumber>
    </recommendedName>
</protein>
<name>ZHD_CLAB1</name>
<comment type="function">
    <text evidence="2">Lactonohydrolase that specifically hydrolyzes zearalenone (ZEN), an oestrogenic mycotoxin produced by numerous Fusarium specie, into a non-toxic alkylresorcinol product.</text>
</comment>
<comment type="catalytic activity">
    <reaction evidence="2">
        <text>zearalenone + H2O = hydrolyzed zearalenone + H(+)</text>
        <dbReference type="Rhea" id="RHEA:79255"/>
        <dbReference type="ChEBI" id="CHEBI:10106"/>
        <dbReference type="ChEBI" id="CHEBI:15377"/>
        <dbReference type="ChEBI" id="CHEBI:15378"/>
        <dbReference type="ChEBI" id="CHEBI:229751"/>
    </reaction>
    <physiologicalReaction direction="left-to-right" evidence="2">
        <dbReference type="Rhea" id="RHEA:79256"/>
    </physiologicalReaction>
</comment>
<comment type="biophysicochemical properties">
    <phDependence>
        <text evidence="2">Optimum pH is 8.0.</text>
    </phDependence>
    <temperatureDependence>
        <text evidence="2">Optimum temperature is 35 degrees Celsius.</text>
    </temperatureDependence>
</comment>
<comment type="subunit">
    <text evidence="2">Homodimer.</text>
</comment>
<comment type="similarity">
    <text evidence="4">Belongs to the AB hydrolase superfamily. Hydrolase RutD family.</text>
</comment>
<dbReference type="EC" id="3.1.1.-" evidence="2"/>
<dbReference type="EMBL" id="KN847015">
    <property type="protein sequence ID" value="KIW86608.1"/>
    <property type="molecule type" value="Genomic_DNA"/>
</dbReference>
<dbReference type="RefSeq" id="XP_016613277.1">
    <property type="nucleotide sequence ID" value="XM_016770497.1"/>
</dbReference>
<dbReference type="PDB" id="5XWZ">
    <property type="method" value="X-ray"/>
    <property type="resolution" value="1.75 A"/>
    <property type="chains" value="A/B/C/D=1-265"/>
</dbReference>
<dbReference type="PDBsum" id="5XWZ"/>
<dbReference type="SMR" id="A0A0D2H023"/>
<dbReference type="ESTHER" id="xylba-a0a0d2h023">
    <property type="family name" value="Zearalenone-hydrolase"/>
</dbReference>
<dbReference type="GeneID" id="27705720"/>
<dbReference type="VEuPathDB" id="FungiDB:Z519_12792"/>
<dbReference type="HOGENOM" id="CLU_1049722_0_0_1"/>
<dbReference type="OrthoDB" id="408373at2759"/>
<dbReference type="Proteomes" id="UP000053789">
    <property type="component" value="Unassembled WGS sequence"/>
</dbReference>
<dbReference type="GO" id="GO:0016787">
    <property type="term" value="F:hydrolase activity"/>
    <property type="evidence" value="ECO:0007669"/>
    <property type="project" value="UniProtKB-KW"/>
</dbReference>
<dbReference type="GO" id="GO:0009636">
    <property type="term" value="P:response to toxic substance"/>
    <property type="evidence" value="ECO:0007669"/>
    <property type="project" value="UniProtKB-KW"/>
</dbReference>
<dbReference type="Gene3D" id="3.40.50.1820">
    <property type="entry name" value="alpha/beta hydrolase"/>
    <property type="match status" value="1"/>
</dbReference>
<dbReference type="InterPro" id="IPR050471">
    <property type="entry name" value="AB_hydrolase"/>
</dbReference>
<dbReference type="InterPro" id="IPR000073">
    <property type="entry name" value="AB_hydrolase_1"/>
</dbReference>
<dbReference type="InterPro" id="IPR029058">
    <property type="entry name" value="AB_hydrolase_fold"/>
</dbReference>
<dbReference type="PANTHER" id="PTHR43433:SF5">
    <property type="entry name" value="AB HYDROLASE-1 DOMAIN-CONTAINING PROTEIN"/>
    <property type="match status" value="1"/>
</dbReference>
<dbReference type="PANTHER" id="PTHR43433">
    <property type="entry name" value="HYDROLASE, ALPHA/BETA FOLD FAMILY PROTEIN"/>
    <property type="match status" value="1"/>
</dbReference>
<dbReference type="Pfam" id="PF00561">
    <property type="entry name" value="Abhydrolase_1"/>
    <property type="match status" value="1"/>
</dbReference>
<dbReference type="SUPFAM" id="SSF53474">
    <property type="entry name" value="alpha/beta-Hydrolases"/>
    <property type="match status" value="1"/>
</dbReference>
<feature type="chain" id="PRO_0000460592" description="Zearalenone hydrolase">
    <location>
        <begin position="1"/>
        <end position="265"/>
    </location>
</feature>
<feature type="active site" evidence="1">
    <location>
        <position position="105"/>
    </location>
</feature>
<feature type="active site" evidence="1">
    <location>
        <position position="129"/>
    </location>
</feature>
<feature type="active site" evidence="1">
    <location>
        <position position="243"/>
    </location>
</feature>
<feature type="binding site" evidence="1">
    <location>
        <position position="35"/>
    </location>
    <ligand>
        <name>zearalenone</name>
        <dbReference type="ChEBI" id="CHEBI:10106"/>
    </ligand>
</feature>
<feature type="binding site" evidence="1">
    <location>
        <position position="105"/>
    </location>
    <ligand>
        <name>zearalenone</name>
        <dbReference type="ChEBI" id="CHEBI:10106"/>
    </ligand>
</feature>
<feature type="binding site" evidence="1">
    <location>
        <position position="106"/>
    </location>
    <ligand>
        <name>zearalenone</name>
        <dbReference type="ChEBI" id="CHEBI:10106"/>
    </ligand>
</feature>
<feature type="binding site" evidence="1">
    <location>
        <position position="185"/>
    </location>
    <ligand>
        <name>zearalenone</name>
        <dbReference type="ChEBI" id="CHEBI:10106"/>
    </ligand>
</feature>
<feature type="binding site" evidence="1">
    <location>
        <position position="189"/>
    </location>
    <ligand>
        <name>zearalenone</name>
        <dbReference type="ChEBI" id="CHEBI:10106"/>
    </ligand>
</feature>
<feature type="binding site" evidence="1">
    <location>
        <position position="243"/>
    </location>
    <ligand>
        <name>zearalenone</name>
        <dbReference type="ChEBI" id="CHEBI:10106"/>
    </ligand>
</feature>
<feature type="strand" evidence="6">
    <location>
        <begin position="5"/>
        <end position="11"/>
    </location>
</feature>
<feature type="strand" evidence="6">
    <location>
        <begin position="17"/>
        <end position="23"/>
    </location>
</feature>
<feature type="strand" evidence="6">
    <location>
        <begin position="25"/>
        <end position="32"/>
    </location>
</feature>
<feature type="helix" evidence="6">
    <location>
        <begin position="39"/>
        <end position="42"/>
    </location>
</feature>
<feature type="helix" evidence="6">
    <location>
        <begin position="43"/>
        <end position="50"/>
    </location>
</feature>
<feature type="turn" evidence="6">
    <location>
        <begin position="51"/>
        <end position="53"/>
    </location>
</feature>
<feature type="strand" evidence="6">
    <location>
        <begin position="55"/>
        <end position="59"/>
    </location>
</feature>
<feature type="helix" evidence="6">
    <location>
        <begin position="65"/>
        <end position="67"/>
    </location>
</feature>
<feature type="helix" evidence="6">
    <location>
        <begin position="72"/>
        <end position="74"/>
    </location>
</feature>
<feature type="helix" evidence="6">
    <location>
        <begin position="80"/>
        <end position="94"/>
    </location>
</feature>
<feature type="strand" evidence="6">
    <location>
        <begin position="98"/>
        <end position="104"/>
    </location>
</feature>
<feature type="helix" evidence="6">
    <location>
        <begin position="106"/>
        <end position="117"/>
    </location>
</feature>
<feature type="helix" evidence="6">
    <location>
        <begin position="119"/>
        <end position="121"/>
    </location>
</feature>
<feature type="strand" evidence="6">
    <location>
        <begin position="122"/>
        <end position="129"/>
    </location>
</feature>
<feature type="helix" evidence="6">
    <location>
        <begin position="140"/>
        <end position="142"/>
    </location>
</feature>
<feature type="helix" evidence="6">
    <location>
        <begin position="146"/>
        <end position="160"/>
    </location>
</feature>
<feature type="helix" evidence="6">
    <location>
        <begin position="164"/>
        <end position="169"/>
    </location>
</feature>
<feature type="helix" evidence="6">
    <location>
        <begin position="172"/>
        <end position="188"/>
    </location>
</feature>
<feature type="turn" evidence="6">
    <location>
        <begin position="190"/>
        <end position="193"/>
    </location>
</feature>
<feature type="helix" evidence="6">
    <location>
        <begin position="194"/>
        <end position="196"/>
    </location>
</feature>
<feature type="helix" evidence="6">
    <location>
        <begin position="201"/>
        <end position="203"/>
    </location>
</feature>
<feature type="strand" evidence="6">
    <location>
        <begin position="204"/>
        <end position="207"/>
    </location>
</feature>
<feature type="strand" evidence="6">
    <location>
        <begin position="211"/>
        <end position="214"/>
    </location>
</feature>
<feature type="turn" evidence="6">
    <location>
        <begin position="219"/>
        <end position="222"/>
    </location>
</feature>
<feature type="helix" evidence="6">
    <location>
        <begin position="223"/>
        <end position="231"/>
    </location>
</feature>
<feature type="strand" evidence="6">
    <location>
        <begin position="236"/>
        <end position="243"/>
    </location>
</feature>
<feature type="helix" evidence="6">
    <location>
        <begin position="245"/>
        <end position="248"/>
    </location>
</feature>
<feature type="helix" evidence="6">
    <location>
        <begin position="250"/>
        <end position="262"/>
    </location>
</feature>
<organism>
    <name type="scientific">Cladophialophora bantiana (strain ATCC 10958 / CDC1940 / 8579 / CBS 173.52)</name>
    <name type="common">Xylohypha bantiana</name>
    <dbReference type="NCBI Taxonomy" id="1442370"/>
    <lineage>
        <taxon>Eukaryota</taxon>
        <taxon>Fungi</taxon>
        <taxon>Dikarya</taxon>
        <taxon>Ascomycota</taxon>
        <taxon>Pezizomycotina</taxon>
        <taxon>Eurotiomycetes</taxon>
        <taxon>Chaetothyriomycetidae</taxon>
        <taxon>Chaetothyriales</taxon>
        <taxon>Herpotrichiellaceae</taxon>
        <taxon>Cladophialophora</taxon>
    </lineage>
</organism>
<sequence>MAPERLRSTILTKDGINWYYEQEGSGPDVVLIPDGLGDCQMFDKPMSIIGSSGFKVTTFDMPGMSRSSSAPPETYQDVTGQKLANYIVTVMDQLGIKTASVWGCSSGASTVLALCSGFPERVRNGMPHEVPTANPENLQNIHDADPATISRDMAAVSRAMSANEEAWDALGPEVHERLRDNYVRWAYGYPRTIPGSAATKTEDLHKVPIDWTVGAAGPTQVFFENVVIATRESIPIKTLPGFHFPYVSHPEAFAKYVVETTRKYL</sequence>
<evidence type="ECO:0000250" key="1">
    <source>
        <dbReference type="UniProtKB" id="Q8NKB0"/>
    </source>
</evidence>
<evidence type="ECO:0000269" key="2">
    <source>
    </source>
</evidence>
<evidence type="ECO:0000303" key="3">
    <source>
    </source>
</evidence>
<evidence type="ECO:0000305" key="4"/>
<evidence type="ECO:0007744" key="5">
    <source>
        <dbReference type="PDB" id="5XWZ"/>
    </source>
</evidence>
<evidence type="ECO:0007829" key="6">
    <source>
        <dbReference type="PDB" id="5XWZ"/>
    </source>
</evidence>
<keyword id="KW-0002">3D-structure</keyword>
<keyword id="KW-0216">Detoxification</keyword>
<keyword id="KW-0378">Hydrolase</keyword>